<sequence length="389" mass="42944">MQPSFTPSGGKWLSIAVILLVIGLVVGFAAGRFTAPIQQSKELNTFAAGSLKYALGNDFNPEFNNLTGIKVGMTFSGSISGAKEVQAGKQYSVFVSASAPVLYQNLINNTHYASWQIVFSANEMAITWTNSKYAINPSWPYWFENITKNSTIVAASNASLDPSGFQAIETMKLAGILYTNWSDPFVQMAFNHNESLFLQYNKAYNTWFEKLGYKANDSLALYHQIFISKYLNHTTKLTTVEIGLDGYLTSGAADYALTYVSQAINQNLSYYKSATGGNGLPIWINLGSLNKTIDQFYEQINESGPAWDNVGNLPGAPILYSVTIINNYTSPYAVQYVYDLITQMGQHYLAMSRFDPLSQPFGINISNMPKQLQAVVTPPPSYLPVSAYE</sequence>
<protein>
    <recommendedName>
        <fullName>Uncharacterized solute-binding protein TV0544</fullName>
    </recommendedName>
</protein>
<comment type="similarity">
    <text evidence="2">Belongs to the bacterial solute-binding protein 1 family. WtpA subfamily.</text>
</comment>
<evidence type="ECO:0000255" key="1"/>
<evidence type="ECO:0000305" key="2"/>
<proteinExistence type="inferred from homology"/>
<keyword id="KW-0732">Signal</keyword>
<name>Y544_THEVO</name>
<feature type="signal peptide" evidence="1">
    <location>
        <begin position="1"/>
        <end position="29"/>
    </location>
</feature>
<feature type="chain" id="PRO_0000159729" description="Uncharacterized solute-binding protein TV0544">
    <location>
        <begin position="30"/>
        <end position="389"/>
    </location>
</feature>
<dbReference type="EMBL" id="BA000011">
    <property type="protein sequence ID" value="BAB59686.1"/>
    <property type="molecule type" value="Genomic_DNA"/>
</dbReference>
<dbReference type="RefSeq" id="WP_010916802.1">
    <property type="nucleotide sequence ID" value="NC_002689.2"/>
</dbReference>
<dbReference type="SMR" id="Q97BB3"/>
<dbReference type="STRING" id="273116.gene:9381329"/>
<dbReference type="PaxDb" id="273116-14324759"/>
<dbReference type="GeneID" id="1441060"/>
<dbReference type="KEGG" id="tvo:TVG0535415"/>
<dbReference type="eggNOG" id="arCOG00219">
    <property type="taxonomic scope" value="Archaea"/>
</dbReference>
<dbReference type="HOGENOM" id="CLU_709076_0_0_2"/>
<dbReference type="OrthoDB" id="56205at2157"/>
<dbReference type="PhylomeDB" id="Q97BB3"/>
<dbReference type="Proteomes" id="UP000001017">
    <property type="component" value="Chromosome"/>
</dbReference>
<dbReference type="GO" id="GO:0030973">
    <property type="term" value="F:molybdate ion binding"/>
    <property type="evidence" value="ECO:0007669"/>
    <property type="project" value="TreeGrafter"/>
</dbReference>
<dbReference type="GO" id="GO:0015689">
    <property type="term" value="P:molybdate ion transport"/>
    <property type="evidence" value="ECO:0007669"/>
    <property type="project" value="TreeGrafter"/>
</dbReference>
<dbReference type="CDD" id="cd13540">
    <property type="entry name" value="PBP2_ModA_WtpA"/>
    <property type="match status" value="1"/>
</dbReference>
<dbReference type="Gene3D" id="3.40.190.10">
    <property type="entry name" value="Periplasmic binding protein-like II"/>
    <property type="match status" value="2"/>
</dbReference>
<dbReference type="InterPro" id="IPR050682">
    <property type="entry name" value="ModA/WtpA"/>
</dbReference>
<dbReference type="PANTHER" id="PTHR30632">
    <property type="entry name" value="MOLYBDATE-BINDING PERIPLASMIC PROTEIN"/>
    <property type="match status" value="1"/>
</dbReference>
<dbReference type="PANTHER" id="PTHR30632:SF16">
    <property type="entry name" value="MOLYBDATE_TUNGSTATE-BINDING PROTEIN WTPA"/>
    <property type="match status" value="1"/>
</dbReference>
<dbReference type="Pfam" id="PF13531">
    <property type="entry name" value="SBP_bac_11"/>
    <property type="match status" value="1"/>
</dbReference>
<dbReference type="SUPFAM" id="SSF53850">
    <property type="entry name" value="Periplasmic binding protein-like II"/>
    <property type="match status" value="1"/>
</dbReference>
<accession>Q97BB3</accession>
<organism>
    <name type="scientific">Thermoplasma volcanium (strain ATCC 51530 / DSM 4299 / JCM 9571 / NBRC 15438 / GSS1)</name>
    <dbReference type="NCBI Taxonomy" id="273116"/>
    <lineage>
        <taxon>Archaea</taxon>
        <taxon>Methanobacteriati</taxon>
        <taxon>Thermoplasmatota</taxon>
        <taxon>Thermoplasmata</taxon>
        <taxon>Thermoplasmatales</taxon>
        <taxon>Thermoplasmataceae</taxon>
        <taxon>Thermoplasma</taxon>
    </lineage>
</organism>
<reference key="1">
    <citation type="journal article" date="2000" name="Proc. Natl. Acad. Sci. U.S.A.">
        <title>Archaeal adaptation to higher temperatures revealed by genomic sequence of Thermoplasma volcanium.</title>
        <authorList>
            <person name="Kawashima T."/>
            <person name="Amano N."/>
            <person name="Koike H."/>
            <person name="Makino S."/>
            <person name="Higuchi S."/>
            <person name="Kawashima-Ohya Y."/>
            <person name="Watanabe K."/>
            <person name="Yamazaki M."/>
            <person name="Kanehori K."/>
            <person name="Kawamoto T."/>
            <person name="Nunoshiba T."/>
            <person name="Yamamoto Y."/>
            <person name="Aramaki H."/>
            <person name="Makino K."/>
            <person name="Suzuki M."/>
        </authorList>
    </citation>
    <scope>NUCLEOTIDE SEQUENCE [LARGE SCALE GENOMIC DNA]</scope>
    <source>
        <strain>ATCC 51530 / DSM 4299 / JCM 9571 / NBRC 15438 / GSS1</strain>
    </source>
</reference>
<gene>
    <name type="ordered locus">TV0544</name>
    <name type="ORF">TVG0535415</name>
</gene>